<feature type="chain" id="PRO_0000261156" description="Cyclin-O">
    <location>
        <begin position="1"/>
        <end position="352"/>
    </location>
</feature>
<feature type="region of interest" description="Disordered" evidence="3">
    <location>
        <begin position="1"/>
        <end position="40"/>
    </location>
</feature>
<feature type="compositionally biased region" description="Basic residues" evidence="3">
    <location>
        <begin position="28"/>
        <end position="40"/>
    </location>
</feature>
<feature type="modified residue" description="Phosphoserine" evidence="2">
    <location>
        <position position="83"/>
    </location>
</feature>
<proteinExistence type="evidence at protein level"/>
<organism>
    <name type="scientific">Mus musculus</name>
    <name type="common">Mouse</name>
    <dbReference type="NCBI Taxonomy" id="10090"/>
    <lineage>
        <taxon>Eukaryota</taxon>
        <taxon>Metazoa</taxon>
        <taxon>Chordata</taxon>
        <taxon>Craniata</taxon>
        <taxon>Vertebrata</taxon>
        <taxon>Euteleostomi</taxon>
        <taxon>Mammalia</taxon>
        <taxon>Eutheria</taxon>
        <taxon>Euarchontoglires</taxon>
        <taxon>Glires</taxon>
        <taxon>Rodentia</taxon>
        <taxon>Myomorpha</taxon>
        <taxon>Muroidea</taxon>
        <taxon>Muridae</taxon>
        <taxon>Murinae</taxon>
        <taxon>Mus</taxon>
        <taxon>Mus</taxon>
    </lineage>
</organism>
<accession>P0C242</accession>
<evidence type="ECO:0000250" key="1"/>
<evidence type="ECO:0000250" key="2">
    <source>
        <dbReference type="UniProtKB" id="P22674"/>
    </source>
</evidence>
<evidence type="ECO:0000256" key="3">
    <source>
        <dbReference type="SAM" id="MobiDB-lite"/>
    </source>
</evidence>
<evidence type="ECO:0000269" key="4">
    <source>
    </source>
</evidence>
<evidence type="ECO:0000269" key="5">
    <source>
    </source>
</evidence>
<evidence type="ECO:0000269" key="6">
    <source>
    </source>
</evidence>
<evidence type="ECO:0000269" key="7">
    <source>
    </source>
</evidence>
<evidence type="ECO:0000305" key="8"/>
<evidence type="ECO:0000312" key="9">
    <source>
        <dbReference type="MGI" id="MGI:2145534"/>
    </source>
</evidence>
<comment type="function">
    <text evidence="1 4 5 7">Specifically required for generation of multiciliated cells, possibly by promoting a cell cycle state compatible with centriole amplification and maturation. Acts downstream of MCIDAS to promote mother centriole amplification and maturation in preparation for apical docking (By similarity). May be involved in apoptosis in lymphoid cells; however, this result requires additional evidences in vivo. May be involved in oocyte meiotic resumption in oocytes.</text>
</comment>
<comment type="subcellular location">
    <subcellularLocation>
        <location evidence="6 7">Cytoplasm</location>
    </subcellularLocation>
    <subcellularLocation>
        <location evidence="2">Nucleus</location>
        <location evidence="2">Nucleolus</location>
    </subcellularLocation>
    <text evidence="6">Localizes to the apical part of cytoplasm.</text>
</comment>
<comment type="tissue specificity">
    <text evidence="5 6 7">Present in respiratory cells (at protein level). Expressed in multiciliated tissue in brain and fallopian tube (at protein level) (PubMed:26777464). Highly expressed in oocytes.</text>
</comment>
<comment type="developmental stage">
    <text evidence="7">Expressed in ependymal cells of the embryonic brain, but almost absent in the adult brain.</text>
</comment>
<comment type="similarity">
    <text evidence="8">Belongs to the cyclin family.</text>
</comment>
<comment type="sequence caution" evidence="8">
    <conflict type="frameshift">
        <sequence resource="EMBL" id="AK086507"/>
    </conflict>
</comment>
<reference key="1">
    <citation type="journal article" date="2006" name="Gene">
        <title>The cyclin-like uracil DNA glycosylase (UDG) of murine oocytes and its relationship to human and chimpanzee homologues.</title>
        <authorList>
            <person name="Hirst R."/>
            <person name="Gosden R."/>
            <person name="Miller D."/>
        </authorList>
    </citation>
    <scope>NUCLEOTIDE SEQUENCE [MRNA]</scope>
    <source>
        <strain>C57BL/6 X CBA/Ca</strain>
        <tissue>Oocyte</tissue>
    </source>
</reference>
<reference key="2">
    <citation type="journal article" date="2005" name="Science">
        <title>The transcriptional landscape of the mammalian genome.</title>
        <authorList>
            <person name="Carninci P."/>
            <person name="Kasukawa T."/>
            <person name="Katayama S."/>
            <person name="Gough J."/>
            <person name="Frith M.C."/>
            <person name="Maeda N."/>
            <person name="Oyama R."/>
            <person name="Ravasi T."/>
            <person name="Lenhard B."/>
            <person name="Wells C."/>
            <person name="Kodzius R."/>
            <person name="Shimokawa K."/>
            <person name="Bajic V.B."/>
            <person name="Brenner S.E."/>
            <person name="Batalov S."/>
            <person name="Forrest A.R."/>
            <person name="Zavolan M."/>
            <person name="Davis M.J."/>
            <person name="Wilming L.G."/>
            <person name="Aidinis V."/>
            <person name="Allen J.E."/>
            <person name="Ambesi-Impiombato A."/>
            <person name="Apweiler R."/>
            <person name="Aturaliya R.N."/>
            <person name="Bailey T.L."/>
            <person name="Bansal M."/>
            <person name="Baxter L."/>
            <person name="Beisel K.W."/>
            <person name="Bersano T."/>
            <person name="Bono H."/>
            <person name="Chalk A.M."/>
            <person name="Chiu K.P."/>
            <person name="Choudhary V."/>
            <person name="Christoffels A."/>
            <person name="Clutterbuck D.R."/>
            <person name="Crowe M.L."/>
            <person name="Dalla E."/>
            <person name="Dalrymple B.P."/>
            <person name="de Bono B."/>
            <person name="Della Gatta G."/>
            <person name="di Bernardo D."/>
            <person name="Down T."/>
            <person name="Engstrom P."/>
            <person name="Fagiolini M."/>
            <person name="Faulkner G."/>
            <person name="Fletcher C.F."/>
            <person name="Fukushima T."/>
            <person name="Furuno M."/>
            <person name="Futaki S."/>
            <person name="Gariboldi M."/>
            <person name="Georgii-Hemming P."/>
            <person name="Gingeras T.R."/>
            <person name="Gojobori T."/>
            <person name="Green R.E."/>
            <person name="Gustincich S."/>
            <person name="Harbers M."/>
            <person name="Hayashi Y."/>
            <person name="Hensch T.K."/>
            <person name="Hirokawa N."/>
            <person name="Hill D."/>
            <person name="Huminiecki L."/>
            <person name="Iacono M."/>
            <person name="Ikeo K."/>
            <person name="Iwama A."/>
            <person name="Ishikawa T."/>
            <person name="Jakt M."/>
            <person name="Kanapin A."/>
            <person name="Katoh M."/>
            <person name="Kawasawa Y."/>
            <person name="Kelso J."/>
            <person name="Kitamura H."/>
            <person name="Kitano H."/>
            <person name="Kollias G."/>
            <person name="Krishnan S.P."/>
            <person name="Kruger A."/>
            <person name="Kummerfeld S.K."/>
            <person name="Kurochkin I.V."/>
            <person name="Lareau L.F."/>
            <person name="Lazarevic D."/>
            <person name="Lipovich L."/>
            <person name="Liu J."/>
            <person name="Liuni S."/>
            <person name="McWilliam S."/>
            <person name="Madan Babu M."/>
            <person name="Madera M."/>
            <person name="Marchionni L."/>
            <person name="Matsuda H."/>
            <person name="Matsuzawa S."/>
            <person name="Miki H."/>
            <person name="Mignone F."/>
            <person name="Miyake S."/>
            <person name="Morris K."/>
            <person name="Mottagui-Tabar S."/>
            <person name="Mulder N."/>
            <person name="Nakano N."/>
            <person name="Nakauchi H."/>
            <person name="Ng P."/>
            <person name="Nilsson R."/>
            <person name="Nishiguchi S."/>
            <person name="Nishikawa S."/>
            <person name="Nori F."/>
            <person name="Ohara O."/>
            <person name="Okazaki Y."/>
            <person name="Orlando V."/>
            <person name="Pang K.C."/>
            <person name="Pavan W.J."/>
            <person name="Pavesi G."/>
            <person name="Pesole G."/>
            <person name="Petrovsky N."/>
            <person name="Piazza S."/>
            <person name="Reed J."/>
            <person name="Reid J.F."/>
            <person name="Ring B.Z."/>
            <person name="Ringwald M."/>
            <person name="Rost B."/>
            <person name="Ruan Y."/>
            <person name="Salzberg S.L."/>
            <person name="Sandelin A."/>
            <person name="Schneider C."/>
            <person name="Schoenbach C."/>
            <person name="Sekiguchi K."/>
            <person name="Semple C.A."/>
            <person name="Seno S."/>
            <person name="Sessa L."/>
            <person name="Sheng Y."/>
            <person name="Shibata Y."/>
            <person name="Shimada H."/>
            <person name="Shimada K."/>
            <person name="Silva D."/>
            <person name="Sinclair B."/>
            <person name="Sperling S."/>
            <person name="Stupka E."/>
            <person name="Sugiura K."/>
            <person name="Sultana R."/>
            <person name="Takenaka Y."/>
            <person name="Taki K."/>
            <person name="Tammoja K."/>
            <person name="Tan S.L."/>
            <person name="Tang S."/>
            <person name="Taylor M.S."/>
            <person name="Tegner J."/>
            <person name="Teichmann S.A."/>
            <person name="Ueda H.R."/>
            <person name="van Nimwegen E."/>
            <person name="Verardo R."/>
            <person name="Wei C.L."/>
            <person name="Yagi K."/>
            <person name="Yamanishi H."/>
            <person name="Zabarovsky E."/>
            <person name="Zhu S."/>
            <person name="Zimmer A."/>
            <person name="Hide W."/>
            <person name="Bult C."/>
            <person name="Grimmond S.M."/>
            <person name="Teasdale R.D."/>
            <person name="Liu E.T."/>
            <person name="Brusic V."/>
            <person name="Quackenbush J."/>
            <person name="Wahlestedt C."/>
            <person name="Mattick J.S."/>
            <person name="Hume D.A."/>
            <person name="Kai C."/>
            <person name="Sasaki D."/>
            <person name="Tomaru Y."/>
            <person name="Fukuda S."/>
            <person name="Kanamori-Katayama M."/>
            <person name="Suzuki M."/>
            <person name="Aoki J."/>
            <person name="Arakawa T."/>
            <person name="Iida J."/>
            <person name="Imamura K."/>
            <person name="Itoh M."/>
            <person name="Kato T."/>
            <person name="Kawaji H."/>
            <person name="Kawagashira N."/>
            <person name="Kawashima T."/>
            <person name="Kojima M."/>
            <person name="Kondo S."/>
            <person name="Konno H."/>
            <person name="Nakano K."/>
            <person name="Ninomiya N."/>
            <person name="Nishio T."/>
            <person name="Okada M."/>
            <person name="Plessy C."/>
            <person name="Shibata K."/>
            <person name="Shiraki T."/>
            <person name="Suzuki S."/>
            <person name="Tagami M."/>
            <person name="Waki K."/>
            <person name="Watahiki A."/>
            <person name="Okamura-Oho Y."/>
            <person name="Suzuki H."/>
            <person name="Kawai J."/>
            <person name="Hayashizaki Y."/>
        </authorList>
    </citation>
    <scope>NUCLEOTIDE SEQUENCE [LARGE SCALE MRNA]</scope>
    <source>
        <tissue>Embryonic head</tissue>
    </source>
</reference>
<reference key="3">
    <citation type="journal article" date="2009" name="Methods Mol. Biol.">
        <title>Measurement of changes in Cdk2 and cyclin o-associated kinase activity in apoptosis.</title>
        <authorList>
            <person name="Roset R."/>
            <person name="Gil-Gomez G."/>
        </authorList>
    </citation>
    <scope>TISSUE SPECIFICITY</scope>
    <scope>FUNCTION</scope>
</reference>
<reference key="4">
    <citation type="journal article" date="2009" name="Cell Death Differ.">
        <title>Identification of a novel cyclin required for the intrinsic apoptosis pathway in lymphoid cells.</title>
        <authorList>
            <person name="Roig M.B."/>
            <person name="Roset R."/>
            <person name="Ortet L."/>
            <person name="Balsiger N.A."/>
            <person name="Anfosso A."/>
            <person name="Cabellos L."/>
            <person name="Garrido M."/>
            <person name="Alameda F."/>
            <person name="Brady H.J."/>
            <person name="Gil-Gomez G."/>
        </authorList>
    </citation>
    <scope>FUNCTION</scope>
</reference>
<reference key="5">
    <citation type="journal article" date="2014" name="Nat. Genet.">
        <title>Mutations in CCNO result in congenital mucociliary clearance disorder with reduced generation of multiple motile cilia.</title>
        <authorList>
            <person name="Wallmeier J."/>
            <person name="Al-Mutairi D.A."/>
            <person name="Chen C.T."/>
            <person name="Loges N.T."/>
            <person name="Pennekamp P."/>
            <person name="Menchen T."/>
            <person name="Ma L."/>
            <person name="Shamseldin H.E."/>
            <person name="Olbrich H."/>
            <person name="Dougherty G.W."/>
            <person name="Werner C."/>
            <person name="Alsabah B.H."/>
            <person name="Koehler G."/>
            <person name="Jaspers M."/>
            <person name="Boon M."/>
            <person name="Griese M."/>
            <person name="Schmitt-Grohe S."/>
            <person name="Zimmermann T."/>
            <person name="Koerner-Rettberg C."/>
            <person name="Horak E."/>
            <person name="Kintner C."/>
            <person name="Alkuraya F.S."/>
            <person name="Omran H."/>
        </authorList>
    </citation>
    <scope>SUBCELLULAR LOCATION</scope>
    <scope>TISSUE SPECIFICITY</scope>
</reference>
<reference key="6">
    <citation type="journal article" date="2016" name="Hum. Mutat.">
        <title>Systematic analysis of CCNO variants in a defined population: implications for clinical phenotype and differential diagnosis.</title>
        <authorList>
            <consortium name="Israeli PCD Consortium Investigators"/>
            <person name="Amirav I."/>
            <person name="Wallmeier J."/>
            <person name="Loges N.T."/>
            <person name="Menchen T."/>
            <person name="Pennekamp P."/>
            <person name="Mussaffi H."/>
            <person name="Abitbul R."/>
            <person name="Avital A."/>
            <person name="Bentur L."/>
            <person name="Dougherty G.W."/>
            <person name="Nael E."/>
            <person name="Lavie M."/>
            <person name="Olbrich H."/>
            <person name="Werner C."/>
            <person name="Kintner C."/>
            <person name="Omran H."/>
        </authorList>
    </citation>
    <scope>FUNCTION</scope>
    <scope>SUBCELLULAR LOCATION</scope>
    <scope>TISSUE SPECIFICITY</scope>
    <scope>DEVELOPMENTAL STAGE</scope>
</reference>
<sequence length="352" mass="38822">MVTPCPASPGSPAAGAGRRDSHQNLRAPVKKSRRPCLRRKKPLRPLNACSLPGDSGVCDLFESPSSSSDGADSPAVSAARDCSSLLNPAQPLTALDLQTFREYGQSCYDFRKAQENLFHPRESLARQPQVTAESRCKLLSWLLQVHRQFGLSFESLCLTVNTLDRFLLTTPVAADCFQLLGVTCLLIACKQVEVHPPRLKQLLALCGGAFSRQQLCNLECIVLHKLHFSLGAPTINFFLEHFTQWRMEAGQAEVTEALEAQTLARGVAELSLTDYAFTTYTPSLMAICCLALADGLLQHQHEMDLRLGEHPEATLQDCLGKLQTLVSINSSSLPRILPPQIWERCSLPQSWQ</sequence>
<dbReference type="EMBL" id="AK086507">
    <property type="status" value="NOT_ANNOTATED_CDS"/>
    <property type="molecule type" value="mRNA"/>
</dbReference>
<dbReference type="CCDS" id="CCDS36782.1"/>
<dbReference type="RefSeq" id="NP_001074531.1">
    <property type="nucleotide sequence ID" value="NM_001081062.2"/>
</dbReference>
<dbReference type="SMR" id="P0C242"/>
<dbReference type="FunCoup" id="P0C242">
    <property type="interactions" value="325"/>
</dbReference>
<dbReference type="STRING" id="10090.ENSMUSP00000040083"/>
<dbReference type="PhosphoSitePlus" id="P0C242"/>
<dbReference type="PaxDb" id="10090-ENSMUSP00000040083"/>
<dbReference type="ProteomicsDB" id="281341"/>
<dbReference type="Antibodypedia" id="11078">
    <property type="antibodies" value="217 antibodies from 25 providers"/>
</dbReference>
<dbReference type="DNASU" id="218630"/>
<dbReference type="Ensembl" id="ENSMUST00000038404.6">
    <property type="protein sequence ID" value="ENSMUSP00000040083.5"/>
    <property type="gene ID" value="ENSMUSG00000042417.6"/>
</dbReference>
<dbReference type="GeneID" id="218630"/>
<dbReference type="KEGG" id="mmu:218630"/>
<dbReference type="UCSC" id="uc007rwz.1">
    <property type="organism name" value="mouse"/>
</dbReference>
<dbReference type="AGR" id="MGI:2145534"/>
<dbReference type="CTD" id="10309"/>
<dbReference type="MGI" id="MGI:2145534">
    <property type="gene designation" value="Ccno"/>
</dbReference>
<dbReference type="VEuPathDB" id="HostDB:ENSMUSG00000042417"/>
<dbReference type="eggNOG" id="KOG0653">
    <property type="taxonomic scope" value="Eukaryota"/>
</dbReference>
<dbReference type="GeneTree" id="ENSGT00940000155998"/>
<dbReference type="HOGENOM" id="CLU_020695_1_0_1"/>
<dbReference type="InParanoid" id="P0C242"/>
<dbReference type="OMA" id="CSPRISH"/>
<dbReference type="OrthoDB" id="5590282at2759"/>
<dbReference type="PhylomeDB" id="P0C242"/>
<dbReference type="TreeFam" id="TF332057"/>
<dbReference type="BioGRID-ORCS" id="218630">
    <property type="hits" value="2 hits in 116 CRISPR screens"/>
</dbReference>
<dbReference type="PRO" id="PR:P0C242"/>
<dbReference type="Proteomes" id="UP000000589">
    <property type="component" value="Chromosome 13"/>
</dbReference>
<dbReference type="RNAct" id="P0C242">
    <property type="molecule type" value="protein"/>
</dbReference>
<dbReference type="Bgee" id="ENSMUSG00000042417">
    <property type="expression patterns" value="Expressed in primary oocyte and 51 other cell types or tissues"/>
</dbReference>
<dbReference type="ExpressionAtlas" id="P0C242">
    <property type="expression patterns" value="baseline and differential"/>
</dbReference>
<dbReference type="GO" id="GO:0034451">
    <property type="term" value="C:centriolar satellite"/>
    <property type="evidence" value="ECO:0007669"/>
    <property type="project" value="Ensembl"/>
</dbReference>
<dbReference type="GO" id="GO:0005737">
    <property type="term" value="C:cytoplasm"/>
    <property type="evidence" value="ECO:0000314"/>
    <property type="project" value="UniProtKB"/>
</dbReference>
<dbReference type="GO" id="GO:0005730">
    <property type="term" value="C:nucleolus"/>
    <property type="evidence" value="ECO:0000250"/>
    <property type="project" value="UniProtKB"/>
</dbReference>
<dbReference type="GO" id="GO:0051301">
    <property type="term" value="P:cell division"/>
    <property type="evidence" value="ECO:0007669"/>
    <property type="project" value="UniProtKB-KW"/>
</dbReference>
<dbReference type="GO" id="GO:0060271">
    <property type="term" value="P:cilium assembly"/>
    <property type="evidence" value="ECO:0000315"/>
    <property type="project" value="MGI"/>
</dbReference>
<dbReference type="GO" id="GO:0000278">
    <property type="term" value="P:mitotic cell cycle"/>
    <property type="evidence" value="ECO:0007669"/>
    <property type="project" value="Ensembl"/>
</dbReference>
<dbReference type="GO" id="GO:1903251">
    <property type="term" value="P:multi-ciliated epithelial cell differentiation"/>
    <property type="evidence" value="ECO:0000250"/>
    <property type="project" value="UniProtKB"/>
</dbReference>
<dbReference type="GO" id="GO:0072520">
    <property type="term" value="P:seminiferous tubule development"/>
    <property type="evidence" value="ECO:0000315"/>
    <property type="project" value="MGI"/>
</dbReference>
<dbReference type="GO" id="GO:0007338">
    <property type="term" value="P:single fertilization"/>
    <property type="evidence" value="ECO:0000315"/>
    <property type="project" value="MGI"/>
</dbReference>
<dbReference type="GO" id="GO:0007283">
    <property type="term" value="P:spermatogenesis"/>
    <property type="evidence" value="ECO:0000315"/>
    <property type="project" value="MGI"/>
</dbReference>
<dbReference type="CDD" id="cd20536">
    <property type="entry name" value="CYCLIN_CCNO_rpt1"/>
    <property type="match status" value="1"/>
</dbReference>
<dbReference type="CDD" id="cd20722">
    <property type="entry name" value="CYCLIN_CCNO_rpt2"/>
    <property type="match status" value="1"/>
</dbReference>
<dbReference type="FunFam" id="1.10.472.10:FF:000064">
    <property type="entry name" value="Cyclin O"/>
    <property type="match status" value="1"/>
</dbReference>
<dbReference type="FunFam" id="1.10.472.10:FF:000061">
    <property type="entry name" value="cyclin-O"/>
    <property type="match status" value="1"/>
</dbReference>
<dbReference type="Gene3D" id="1.10.472.10">
    <property type="entry name" value="Cyclin-like"/>
    <property type="match status" value="2"/>
</dbReference>
<dbReference type="InterPro" id="IPR039361">
    <property type="entry name" value="Cyclin"/>
</dbReference>
<dbReference type="InterPro" id="IPR013763">
    <property type="entry name" value="Cyclin-like_dom"/>
</dbReference>
<dbReference type="InterPro" id="IPR036915">
    <property type="entry name" value="Cyclin-like_sf"/>
</dbReference>
<dbReference type="InterPro" id="IPR004367">
    <property type="entry name" value="Cyclin_C-dom"/>
</dbReference>
<dbReference type="InterPro" id="IPR006671">
    <property type="entry name" value="Cyclin_N"/>
</dbReference>
<dbReference type="PANTHER" id="PTHR10177">
    <property type="entry name" value="CYCLINS"/>
    <property type="match status" value="1"/>
</dbReference>
<dbReference type="Pfam" id="PF02984">
    <property type="entry name" value="Cyclin_C"/>
    <property type="match status" value="1"/>
</dbReference>
<dbReference type="Pfam" id="PF00134">
    <property type="entry name" value="Cyclin_N"/>
    <property type="match status" value="1"/>
</dbReference>
<dbReference type="SMART" id="SM00385">
    <property type="entry name" value="CYCLIN"/>
    <property type="match status" value="2"/>
</dbReference>
<dbReference type="SMART" id="SM01332">
    <property type="entry name" value="Cyclin_C"/>
    <property type="match status" value="1"/>
</dbReference>
<dbReference type="SUPFAM" id="SSF47954">
    <property type="entry name" value="Cyclin-like"/>
    <property type="match status" value="2"/>
</dbReference>
<gene>
    <name evidence="9" type="primary">Ccno</name>
</gene>
<keyword id="KW-0131">Cell cycle</keyword>
<keyword id="KW-0132">Cell division</keyword>
<keyword id="KW-0970">Cilium biogenesis/degradation</keyword>
<keyword id="KW-0195">Cyclin</keyword>
<keyword id="KW-0963">Cytoplasm</keyword>
<keyword id="KW-0539">Nucleus</keyword>
<keyword id="KW-0597">Phosphoprotein</keyword>
<keyword id="KW-1185">Reference proteome</keyword>
<protein>
    <recommendedName>
        <fullName evidence="8">Cyclin-O</fullName>
    </recommendedName>
</protein>
<name>CCNO_MOUSE</name>